<feature type="chain" id="PRO_0000155904" description="Ribonuclease Z">
    <location>
        <begin position="1"/>
        <end position="301"/>
    </location>
</feature>
<feature type="active site" description="Proton acceptor" evidence="1">
    <location>
        <position position="67"/>
    </location>
</feature>
<feature type="binding site" evidence="1">
    <location>
        <position position="63"/>
    </location>
    <ligand>
        <name>Zn(2+)</name>
        <dbReference type="ChEBI" id="CHEBI:29105"/>
        <label>1</label>
        <note>catalytic</note>
    </ligand>
</feature>
<feature type="binding site" evidence="1">
    <location>
        <position position="65"/>
    </location>
    <ligand>
        <name>Zn(2+)</name>
        <dbReference type="ChEBI" id="CHEBI:29105"/>
        <label>1</label>
        <note>catalytic</note>
    </ligand>
</feature>
<feature type="binding site" evidence="1">
    <location>
        <position position="67"/>
    </location>
    <ligand>
        <name>Zn(2+)</name>
        <dbReference type="ChEBI" id="CHEBI:29105"/>
        <label>2</label>
        <note>catalytic</note>
    </ligand>
</feature>
<feature type="binding site" evidence="1">
    <location>
        <position position="68"/>
    </location>
    <ligand>
        <name>Zn(2+)</name>
        <dbReference type="ChEBI" id="CHEBI:29105"/>
        <label>2</label>
        <note>catalytic</note>
    </ligand>
</feature>
<feature type="binding site" evidence="1">
    <location>
        <position position="141"/>
    </location>
    <ligand>
        <name>Zn(2+)</name>
        <dbReference type="ChEBI" id="CHEBI:29105"/>
        <label>1</label>
        <note>catalytic</note>
    </ligand>
</feature>
<feature type="binding site" evidence="1">
    <location>
        <position position="204"/>
    </location>
    <ligand>
        <name>Zn(2+)</name>
        <dbReference type="ChEBI" id="CHEBI:29105"/>
        <label>1</label>
        <note>catalytic</note>
    </ligand>
</feature>
<feature type="binding site" evidence="1">
    <location>
        <position position="204"/>
    </location>
    <ligand>
        <name>Zn(2+)</name>
        <dbReference type="ChEBI" id="CHEBI:29105"/>
        <label>2</label>
        <note>catalytic</note>
    </ligand>
</feature>
<feature type="binding site" evidence="1">
    <location>
        <position position="262"/>
    </location>
    <ligand>
        <name>Zn(2+)</name>
        <dbReference type="ChEBI" id="CHEBI:29105"/>
        <label>2</label>
        <note>catalytic</note>
    </ligand>
</feature>
<sequence length="301" mass="33377">MSVRELVVLGTASQVPTRHRNHNGYLLRWDGEGILFDPGEGTQRQMLRAGVAAHDLNRICVTHFHGDHSLGLAGVIQRINLDRVPHEITAHYPRSGQRFFERLRYATAYRETVALTEVPVAADGPLAVTPAYTLDARRLSHPVESYGYRLTEPDGRRMLPERLAAHGITGPDVGRIQRDGSLGGVALDEVSEVRRGQRFAFVMDTRLCEGVHALAEDSDLLVIESTFLDEDETLATDHGHLTAGQAARVARDAGVRHLVLTHFSQRYSDPEEFGRQARAAGYAGELTVARDLTRVPVPKRR</sequence>
<keyword id="KW-0255">Endonuclease</keyword>
<keyword id="KW-0378">Hydrolase</keyword>
<keyword id="KW-0479">Metal-binding</keyword>
<keyword id="KW-0540">Nuclease</keyword>
<keyword id="KW-1185">Reference proteome</keyword>
<keyword id="KW-0819">tRNA processing</keyword>
<keyword id="KW-0862">Zinc</keyword>
<name>RNZ_STRCO</name>
<organism>
    <name type="scientific">Streptomyces coelicolor (strain ATCC BAA-471 / A3(2) / M145)</name>
    <dbReference type="NCBI Taxonomy" id="100226"/>
    <lineage>
        <taxon>Bacteria</taxon>
        <taxon>Bacillati</taxon>
        <taxon>Actinomycetota</taxon>
        <taxon>Actinomycetes</taxon>
        <taxon>Kitasatosporales</taxon>
        <taxon>Streptomycetaceae</taxon>
        <taxon>Streptomyces</taxon>
        <taxon>Streptomyces albidoflavus group</taxon>
    </lineage>
</organism>
<accession>Q9RDE4</accession>
<protein>
    <recommendedName>
        <fullName evidence="1">Ribonuclease Z</fullName>
        <shortName evidence="1">RNase Z</shortName>
        <ecNumber evidence="1">3.1.26.11</ecNumber>
    </recommendedName>
    <alternativeName>
        <fullName evidence="1">tRNA 3 endonuclease</fullName>
    </alternativeName>
    <alternativeName>
        <fullName evidence="1">tRNase Z</fullName>
    </alternativeName>
</protein>
<evidence type="ECO:0000255" key="1">
    <source>
        <dbReference type="HAMAP-Rule" id="MF_01818"/>
    </source>
</evidence>
<comment type="function">
    <text evidence="1">Zinc phosphodiesterase, which displays some tRNA 3'-processing endonuclease activity. Probably involved in tRNA maturation, by removing a 3'-trailer from precursor tRNA.</text>
</comment>
<comment type="catalytic activity">
    <reaction evidence="1">
        <text>Endonucleolytic cleavage of RNA, removing extra 3' nucleotides from tRNA precursor, generating 3' termini of tRNAs. A 3'-hydroxy group is left at the tRNA terminus and a 5'-phosphoryl group is left at the trailer molecule.</text>
        <dbReference type="EC" id="3.1.26.11"/>
    </reaction>
</comment>
<comment type="cofactor">
    <cofactor evidence="1">
        <name>Zn(2+)</name>
        <dbReference type="ChEBI" id="CHEBI:29105"/>
    </cofactor>
    <text evidence="1">Binds 2 Zn(2+) ions.</text>
</comment>
<comment type="subunit">
    <text evidence="1">Homodimer.</text>
</comment>
<comment type="similarity">
    <text evidence="1">Belongs to the RNase Z family.</text>
</comment>
<gene>
    <name evidence="1" type="primary">rnz</name>
    <name type="ordered locus">SCO2547</name>
    <name type="ORF">SCC77.14c</name>
</gene>
<reference key="1">
    <citation type="journal article" date="2002" name="Nature">
        <title>Complete genome sequence of the model actinomycete Streptomyces coelicolor A3(2).</title>
        <authorList>
            <person name="Bentley S.D."/>
            <person name="Chater K.F."/>
            <person name="Cerdeno-Tarraga A.-M."/>
            <person name="Challis G.L."/>
            <person name="Thomson N.R."/>
            <person name="James K.D."/>
            <person name="Harris D.E."/>
            <person name="Quail M.A."/>
            <person name="Kieser H."/>
            <person name="Harper D."/>
            <person name="Bateman A."/>
            <person name="Brown S."/>
            <person name="Chandra G."/>
            <person name="Chen C.W."/>
            <person name="Collins M."/>
            <person name="Cronin A."/>
            <person name="Fraser A."/>
            <person name="Goble A."/>
            <person name="Hidalgo J."/>
            <person name="Hornsby T."/>
            <person name="Howarth S."/>
            <person name="Huang C.-H."/>
            <person name="Kieser T."/>
            <person name="Larke L."/>
            <person name="Murphy L.D."/>
            <person name="Oliver K."/>
            <person name="O'Neil S."/>
            <person name="Rabbinowitsch E."/>
            <person name="Rajandream M.A."/>
            <person name="Rutherford K.M."/>
            <person name="Rutter S."/>
            <person name="Seeger K."/>
            <person name="Saunders D."/>
            <person name="Sharp S."/>
            <person name="Squares R."/>
            <person name="Squares S."/>
            <person name="Taylor K."/>
            <person name="Warren T."/>
            <person name="Wietzorrek A."/>
            <person name="Woodward J.R."/>
            <person name="Barrell B.G."/>
            <person name="Parkhill J."/>
            <person name="Hopwood D.A."/>
        </authorList>
    </citation>
    <scope>NUCLEOTIDE SEQUENCE [LARGE SCALE GENOMIC DNA]</scope>
    <source>
        <strain>ATCC BAA-471 / A3(2) / M145</strain>
    </source>
</reference>
<proteinExistence type="inferred from homology"/>
<dbReference type="EC" id="3.1.26.11" evidence="1"/>
<dbReference type="EMBL" id="AL939113">
    <property type="protein sequence ID" value="CAB66225.1"/>
    <property type="molecule type" value="Genomic_DNA"/>
</dbReference>
<dbReference type="RefSeq" id="NP_626785.1">
    <property type="nucleotide sequence ID" value="NC_003888.3"/>
</dbReference>
<dbReference type="RefSeq" id="WP_011028422.1">
    <property type="nucleotide sequence ID" value="NZ_VNID01000001.1"/>
</dbReference>
<dbReference type="SMR" id="Q9RDE4"/>
<dbReference type="STRING" id="100226.gene:17760149"/>
<dbReference type="PaxDb" id="100226-SCO2547"/>
<dbReference type="KEGG" id="sco:SCO2547"/>
<dbReference type="PATRIC" id="fig|100226.15.peg.2592"/>
<dbReference type="eggNOG" id="COG1234">
    <property type="taxonomic scope" value="Bacteria"/>
</dbReference>
<dbReference type="HOGENOM" id="CLU_031317_2_1_11"/>
<dbReference type="InParanoid" id="Q9RDE4"/>
<dbReference type="OrthoDB" id="9800940at2"/>
<dbReference type="PhylomeDB" id="Q9RDE4"/>
<dbReference type="Proteomes" id="UP000001973">
    <property type="component" value="Chromosome"/>
</dbReference>
<dbReference type="GO" id="GO:0042781">
    <property type="term" value="F:3'-tRNA processing endoribonuclease activity"/>
    <property type="evidence" value="ECO:0000318"/>
    <property type="project" value="GO_Central"/>
</dbReference>
<dbReference type="GO" id="GO:0008270">
    <property type="term" value="F:zinc ion binding"/>
    <property type="evidence" value="ECO:0007669"/>
    <property type="project" value="UniProtKB-UniRule"/>
</dbReference>
<dbReference type="CDD" id="cd07717">
    <property type="entry name" value="RNaseZ_ZiPD-like_MBL-fold"/>
    <property type="match status" value="1"/>
</dbReference>
<dbReference type="FunFam" id="3.60.15.10:FF:000105">
    <property type="entry name" value="Ribonuclease Z"/>
    <property type="match status" value="1"/>
</dbReference>
<dbReference type="Gene3D" id="3.60.15.10">
    <property type="entry name" value="Ribonuclease Z/Hydroxyacylglutathione hydrolase-like"/>
    <property type="match status" value="1"/>
</dbReference>
<dbReference type="HAMAP" id="MF_01818">
    <property type="entry name" value="RNase_Z_BN"/>
    <property type="match status" value="1"/>
</dbReference>
<dbReference type="InterPro" id="IPR001279">
    <property type="entry name" value="Metallo-B-lactamas"/>
</dbReference>
<dbReference type="InterPro" id="IPR036866">
    <property type="entry name" value="RibonucZ/Hydroxyglut_hydro"/>
</dbReference>
<dbReference type="InterPro" id="IPR013471">
    <property type="entry name" value="RNase_Z/BN"/>
</dbReference>
<dbReference type="NCBIfam" id="NF000805">
    <property type="entry name" value="PRK00055.2-3"/>
    <property type="match status" value="1"/>
</dbReference>
<dbReference type="PANTHER" id="PTHR46018">
    <property type="entry name" value="ZINC PHOSPHODIESTERASE ELAC PROTEIN 1"/>
    <property type="match status" value="1"/>
</dbReference>
<dbReference type="PANTHER" id="PTHR46018:SF2">
    <property type="entry name" value="ZINC PHOSPHODIESTERASE ELAC PROTEIN 1"/>
    <property type="match status" value="1"/>
</dbReference>
<dbReference type="Pfam" id="PF00753">
    <property type="entry name" value="Lactamase_B"/>
    <property type="match status" value="1"/>
</dbReference>
<dbReference type="Pfam" id="PF12706">
    <property type="entry name" value="Lactamase_B_2"/>
    <property type="match status" value="1"/>
</dbReference>
<dbReference type="SUPFAM" id="SSF56281">
    <property type="entry name" value="Metallo-hydrolase/oxidoreductase"/>
    <property type="match status" value="1"/>
</dbReference>